<name>AHD2_TETPY</name>
<proteinExistence type="evidence at protein level"/>
<feature type="chain" id="PRO_0000064503" description="20-alpha-hydroxysteroid dehydrogenase">
    <location>
        <begin position="1"/>
        <end position="18" status="greater than"/>
    </location>
</feature>
<feature type="non-terminal residue">
    <location>
        <position position="18"/>
    </location>
</feature>
<organism>
    <name type="scientific">Tetrahymena pyriformis</name>
    <dbReference type="NCBI Taxonomy" id="5908"/>
    <lineage>
        <taxon>Eukaryota</taxon>
        <taxon>Sar</taxon>
        <taxon>Alveolata</taxon>
        <taxon>Ciliophora</taxon>
        <taxon>Intramacronucleata</taxon>
        <taxon>Oligohymenophorea</taxon>
        <taxon>Hymenostomatida</taxon>
        <taxon>Tetrahymenina</taxon>
        <taxon>Tetrahymenidae</taxon>
        <taxon>Tetrahymena</taxon>
    </lineage>
</organism>
<reference key="1">
    <citation type="journal article" date="1994" name="Biochem. J.">
        <title>Purification and characterization of a novel dimeric 20 alpha-hydroxysteroid dehydrogenase from Tetrahymena pyriformis.</title>
        <authorList>
            <person name="Inazu A."/>
            <person name="Sato K."/>
            <person name="Nakayama Y."/>
            <person name="Hara A."/>
            <person name="Nozawa Y."/>
        </authorList>
    </citation>
    <scope>PROTEIN SEQUENCE</scope>
    <scope>CHARACTERIZATION</scope>
    <source>
        <strain>W</strain>
    </source>
</reference>
<comment type="function">
    <text>Specific for the oxidation of the 20-alpha hydroxy group of 17-alpha-hydroxyprogesterone and 17-alpha-hydroxypregnenolone.</text>
</comment>
<comment type="catalytic activity">
    <reaction>
        <text>(17R,20S)-17,20-dihydroxypregn-4-en-3-one + NADP(+) = 17alpha-hydroxyprogesterone + NADPH + H(+)</text>
        <dbReference type="Rhea" id="RHEA:15857"/>
        <dbReference type="ChEBI" id="CHEBI:15378"/>
        <dbReference type="ChEBI" id="CHEBI:16418"/>
        <dbReference type="ChEBI" id="CHEBI:17252"/>
        <dbReference type="ChEBI" id="CHEBI:57783"/>
        <dbReference type="ChEBI" id="CHEBI:58349"/>
        <dbReference type="EC" id="1.1.1.149"/>
    </reaction>
</comment>
<comment type="catalytic activity">
    <reaction>
        <text>(17R,20S)-17,20-dihydroxypregn-4-en-3-one + NAD(+) = 17alpha-hydroxyprogesterone + NADH + H(+)</text>
        <dbReference type="Rhea" id="RHEA:15853"/>
        <dbReference type="ChEBI" id="CHEBI:15378"/>
        <dbReference type="ChEBI" id="CHEBI:16418"/>
        <dbReference type="ChEBI" id="CHEBI:17252"/>
        <dbReference type="ChEBI" id="CHEBI:57540"/>
        <dbReference type="ChEBI" id="CHEBI:57945"/>
        <dbReference type="EC" id="1.1.1.149"/>
    </reaction>
</comment>
<comment type="subunit">
    <text>Homodimer.</text>
</comment>
<accession>P35430</accession>
<keyword id="KW-0903">Direct protein sequencing</keyword>
<keyword id="KW-0521">NADP</keyword>
<keyword id="KW-0560">Oxidoreductase</keyword>
<sequence>LAKTVPLNDGTNFPIFGG</sequence>
<dbReference type="EC" id="1.1.1.149"/>
<dbReference type="PIR" id="S40502">
    <property type="entry name" value="S40502"/>
</dbReference>
<dbReference type="SABIO-RK" id="P35430"/>
<dbReference type="GO" id="GO:0047006">
    <property type="term" value="F:17-alpha,20-alpha-dihydroxypregn-4-en-3-one dehydrogenase [NAD(P)+] activity"/>
    <property type="evidence" value="ECO:0007669"/>
    <property type="project" value="UniProtKB-EC"/>
</dbReference>
<protein>
    <recommendedName>
        <fullName>20-alpha-hydroxysteroid dehydrogenase</fullName>
        <shortName>20-alpha-HSD</shortName>
        <ecNumber>1.1.1.149</ecNumber>
    </recommendedName>
</protein>